<accession>O19092</accession>
<accession>Q5EG77</accession>
<gene>
    <name type="primary">CST3</name>
</gene>
<organism>
    <name type="scientific">Macaca mulatta</name>
    <name type="common">Rhesus macaque</name>
    <dbReference type="NCBI Taxonomy" id="9544"/>
    <lineage>
        <taxon>Eukaryota</taxon>
        <taxon>Metazoa</taxon>
        <taxon>Chordata</taxon>
        <taxon>Craniata</taxon>
        <taxon>Vertebrata</taxon>
        <taxon>Euteleostomi</taxon>
        <taxon>Mammalia</taxon>
        <taxon>Eutheria</taxon>
        <taxon>Euarchontoglires</taxon>
        <taxon>Primates</taxon>
        <taxon>Haplorrhini</taxon>
        <taxon>Catarrhini</taxon>
        <taxon>Cercopithecidae</taxon>
        <taxon>Cercopithecinae</taxon>
        <taxon>Macaca</taxon>
    </lineage>
</organism>
<name>CYTC_MACMU</name>
<sequence>MAGPLRAPLLLLAILAVALAVSPAAGASPGKPPRLVGGPMDASVEEEGVRRALDFAVSEYNKASNDMYHSRALQVVRARKQIVAGVNYFLDVELGRTTCTKTQPNLDNCPFHEQPHLKRKAFCSFQIYTVPWQGTMTLSKSTCQDA</sequence>
<keyword id="KW-0034">Amyloid</keyword>
<keyword id="KW-1015">Disulfide bond</keyword>
<keyword id="KW-0597">Phosphoprotein</keyword>
<keyword id="KW-0646">Protease inhibitor</keyword>
<keyword id="KW-1185">Reference proteome</keyword>
<keyword id="KW-0964">Secreted</keyword>
<keyword id="KW-0732">Signal</keyword>
<keyword id="KW-0789">Thiol protease inhibitor</keyword>
<feature type="signal peptide" evidence="1">
    <location>
        <begin position="1"/>
        <end position="26"/>
    </location>
</feature>
<feature type="chain" id="PRO_0000006640" description="Cystatin-C">
    <location>
        <begin position="27"/>
        <end position="146"/>
    </location>
</feature>
<feature type="short sequence motif" description="Secondary area of contact">
    <location>
        <begin position="81"/>
        <end position="85"/>
    </location>
</feature>
<feature type="site" description="Reactive site">
    <location>
        <position position="37"/>
    </location>
</feature>
<feature type="modified residue" description="Phosphoserine" evidence="2">
    <location>
        <position position="43"/>
    </location>
</feature>
<feature type="disulfide bond" evidence="1">
    <location>
        <begin position="99"/>
        <end position="109"/>
    </location>
</feature>
<feature type="disulfide bond" evidence="1">
    <location>
        <begin position="123"/>
        <end position="143"/>
    </location>
</feature>
<evidence type="ECO:0000250" key="1"/>
<evidence type="ECO:0000250" key="2">
    <source>
        <dbReference type="UniProtKB" id="P01034"/>
    </source>
</evidence>
<evidence type="ECO:0000305" key="3"/>
<comment type="function">
    <text>As an inhibitor of cysteine proteinases, this protein is thought to serve an important physiological role as a local regulator of this enzyme activity.</text>
</comment>
<comment type="subcellular location">
    <subcellularLocation>
        <location evidence="1">Secreted</location>
    </subcellularLocation>
</comment>
<comment type="similarity">
    <text evidence="3">Belongs to the cystatin family.</text>
</comment>
<protein>
    <recommendedName>
        <fullName>Cystatin-C</fullName>
    </recommendedName>
    <alternativeName>
        <fullName>Cystatin-3</fullName>
    </alternativeName>
</protein>
<proteinExistence type="evidence at transcript level"/>
<reference key="1">
    <citation type="journal article" date="1996" name="Stroke">
        <title>Cystatin C. Icelandic-like mutation in an animal model of cerebrovascular beta-amyloidosis.</title>
        <authorList>
            <person name="Wei L.H."/>
            <person name="Walker L.C."/>
            <person name="Levy E."/>
        </authorList>
    </citation>
    <scope>NUCLEOTIDE SEQUENCE [MRNA]</scope>
</reference>
<reference key="2">
    <citation type="submission" date="2005-01" db="EMBL/GenBank/DDBJ databases">
        <title>Rhesus monkey DNA sequencing.</title>
        <authorList>
            <person name="Cao W.G."/>
            <person name="Jia Y.B."/>
            <person name="Mah K."/>
            <person name="Slayden O.D."/>
            <person name="Brenner R.M."/>
        </authorList>
    </citation>
    <scope>NUCLEOTIDE SEQUENCE [MRNA]</scope>
</reference>
<dbReference type="EMBL" id="U51912">
    <property type="protein sequence ID" value="AAB64050.1"/>
    <property type="molecule type" value="mRNA"/>
</dbReference>
<dbReference type="EMBL" id="AY885223">
    <property type="protein sequence ID" value="AAW79565.1"/>
    <property type="molecule type" value="mRNA"/>
</dbReference>
<dbReference type="RefSeq" id="NP_001028096.1">
    <property type="nucleotide sequence ID" value="NM_001032924.2"/>
</dbReference>
<dbReference type="RefSeq" id="XP_015005078.1">
    <property type="nucleotide sequence ID" value="XM_015149592.1"/>
</dbReference>
<dbReference type="SMR" id="O19092"/>
<dbReference type="FunCoup" id="O19092">
    <property type="interactions" value="212"/>
</dbReference>
<dbReference type="STRING" id="9544.ENSMMUP00000061250"/>
<dbReference type="MEROPS" id="I25.004"/>
<dbReference type="PaxDb" id="9544-ENSMMUP00000012060"/>
<dbReference type="Ensembl" id="ENSMMUT00000108399.1">
    <property type="protein sequence ID" value="ENSMMUP00000061250.1"/>
    <property type="gene ID" value="ENSMMUG00000050596.1"/>
</dbReference>
<dbReference type="GeneID" id="574313"/>
<dbReference type="KEGG" id="mcc:574313"/>
<dbReference type="CTD" id="1471"/>
<dbReference type="VEuPathDB" id="HostDB:ENSMMUG00000050596"/>
<dbReference type="eggNOG" id="ENOG502SC50">
    <property type="taxonomic scope" value="Eukaryota"/>
</dbReference>
<dbReference type="GeneTree" id="ENSGT00940000154755"/>
<dbReference type="HOGENOM" id="CLU_118168_0_1_1"/>
<dbReference type="InParanoid" id="O19092"/>
<dbReference type="OMA" id="VKSSCQD"/>
<dbReference type="OrthoDB" id="1908104at2759"/>
<dbReference type="Proteomes" id="UP000006718">
    <property type="component" value="Chromosome 10"/>
</dbReference>
<dbReference type="Bgee" id="ENSMMUG00000050596">
    <property type="expression patterns" value="Expressed in Ammon's horn and 21 other cell types or tissues"/>
</dbReference>
<dbReference type="ExpressionAtlas" id="O19092">
    <property type="expression patterns" value="baseline"/>
</dbReference>
<dbReference type="GO" id="GO:0005737">
    <property type="term" value="C:cytoplasm"/>
    <property type="evidence" value="ECO:0000318"/>
    <property type="project" value="GO_Central"/>
</dbReference>
<dbReference type="GO" id="GO:0005615">
    <property type="term" value="C:extracellular space"/>
    <property type="evidence" value="ECO:0000318"/>
    <property type="project" value="GO_Central"/>
</dbReference>
<dbReference type="GO" id="GO:0005794">
    <property type="term" value="C:Golgi apparatus"/>
    <property type="evidence" value="ECO:0007669"/>
    <property type="project" value="Ensembl"/>
</dbReference>
<dbReference type="GO" id="GO:0005886">
    <property type="term" value="C:plasma membrane"/>
    <property type="evidence" value="ECO:0007669"/>
    <property type="project" value="Ensembl"/>
</dbReference>
<dbReference type="GO" id="GO:0031982">
    <property type="term" value="C:vesicle"/>
    <property type="evidence" value="ECO:0000318"/>
    <property type="project" value="GO_Central"/>
</dbReference>
<dbReference type="GO" id="GO:0001540">
    <property type="term" value="F:amyloid-beta binding"/>
    <property type="evidence" value="ECO:0007669"/>
    <property type="project" value="Ensembl"/>
</dbReference>
<dbReference type="GO" id="GO:0004869">
    <property type="term" value="F:cysteine-type endopeptidase inhibitor activity"/>
    <property type="evidence" value="ECO:0000318"/>
    <property type="project" value="GO_Central"/>
</dbReference>
<dbReference type="GO" id="GO:0042802">
    <property type="term" value="F:identical protein binding"/>
    <property type="evidence" value="ECO:0007669"/>
    <property type="project" value="Ensembl"/>
</dbReference>
<dbReference type="GO" id="GO:0002020">
    <property type="term" value="F:protease binding"/>
    <property type="evidence" value="ECO:0007669"/>
    <property type="project" value="Ensembl"/>
</dbReference>
<dbReference type="GO" id="GO:0006952">
    <property type="term" value="P:defense response"/>
    <property type="evidence" value="ECO:0007669"/>
    <property type="project" value="Ensembl"/>
</dbReference>
<dbReference type="GO" id="GO:0060313">
    <property type="term" value="P:negative regulation of blood vessel remodeling"/>
    <property type="evidence" value="ECO:0007669"/>
    <property type="project" value="Ensembl"/>
</dbReference>
<dbReference type="GO" id="GO:0010711">
    <property type="term" value="P:negative regulation of collagen catabolic process"/>
    <property type="evidence" value="ECO:0007669"/>
    <property type="project" value="Ensembl"/>
</dbReference>
<dbReference type="GO" id="GO:0060311">
    <property type="term" value="P:negative regulation of elastin catabolic process"/>
    <property type="evidence" value="ECO:0007669"/>
    <property type="project" value="Ensembl"/>
</dbReference>
<dbReference type="GO" id="GO:0010716">
    <property type="term" value="P:negative regulation of extracellular matrix disassembly"/>
    <property type="evidence" value="ECO:0007669"/>
    <property type="project" value="Ensembl"/>
</dbReference>
<dbReference type="GO" id="GO:0045861">
    <property type="term" value="P:negative regulation of proteolysis"/>
    <property type="evidence" value="ECO:0007669"/>
    <property type="project" value="Ensembl"/>
</dbReference>
<dbReference type="GO" id="GO:0097435">
    <property type="term" value="P:supramolecular fiber organization"/>
    <property type="evidence" value="ECO:0007669"/>
    <property type="project" value="Ensembl"/>
</dbReference>
<dbReference type="CDD" id="cd00042">
    <property type="entry name" value="CY"/>
    <property type="match status" value="1"/>
</dbReference>
<dbReference type="FunFam" id="3.10.450.10:FF:000004">
    <property type="entry name" value="Cystatin C"/>
    <property type="match status" value="1"/>
</dbReference>
<dbReference type="Gene3D" id="3.10.450.10">
    <property type="match status" value="1"/>
</dbReference>
<dbReference type="InterPro" id="IPR000010">
    <property type="entry name" value="Cystatin_dom"/>
</dbReference>
<dbReference type="InterPro" id="IPR046350">
    <property type="entry name" value="Cystatin_sf"/>
</dbReference>
<dbReference type="InterPro" id="IPR018073">
    <property type="entry name" value="Prot_inh_cystat_CS"/>
</dbReference>
<dbReference type="PANTHER" id="PTHR46186">
    <property type="entry name" value="CYSTATIN"/>
    <property type="match status" value="1"/>
</dbReference>
<dbReference type="PANTHER" id="PTHR46186:SF10">
    <property type="entry name" value="CYSTATIN-C"/>
    <property type="match status" value="1"/>
</dbReference>
<dbReference type="Pfam" id="PF00031">
    <property type="entry name" value="Cystatin"/>
    <property type="match status" value="1"/>
</dbReference>
<dbReference type="SMART" id="SM00043">
    <property type="entry name" value="CY"/>
    <property type="match status" value="1"/>
</dbReference>
<dbReference type="SUPFAM" id="SSF54403">
    <property type="entry name" value="Cystatin/monellin"/>
    <property type="match status" value="1"/>
</dbReference>
<dbReference type="PROSITE" id="PS00287">
    <property type="entry name" value="CYSTATIN"/>
    <property type="match status" value="1"/>
</dbReference>